<evidence type="ECO:0000255" key="1">
    <source>
        <dbReference type="HAMAP-Rule" id="MF_00167"/>
    </source>
</evidence>
<keyword id="KW-0010">Activator</keyword>
<keyword id="KW-0963">Cytoplasm</keyword>
<keyword id="KW-0678">Repressor</keyword>
<keyword id="KW-0694">RNA-binding</keyword>
<keyword id="KW-0810">Translation regulation</keyword>
<sequence>MLILTRRVGETLMIGDLVTVTVLGVKGNQVRIGIDAPKDVAVHREEIYQRIQRGDEPVASGAHHNDDCSD</sequence>
<feature type="chain" id="PRO_1000023439" description="Translational regulator CsrA">
    <location>
        <begin position="1"/>
        <end position="70"/>
    </location>
</feature>
<gene>
    <name evidence="1" type="primary">csrA</name>
    <name type="ordered locus">XC_2506</name>
</gene>
<comment type="function">
    <text evidence="1">A key translational regulator that binds mRNA to regulate translation initiation and/or mRNA stability. Mediates global changes in gene expression, shifting from rapid growth to stress survival by linking envelope stress, the stringent response and the catabolite repression systems. Usually binds in the 5'-UTR; binding at or near the Shine-Dalgarno sequence prevents ribosome-binding, repressing translation, binding elsewhere in the 5'-UTR can activate translation and/or stabilize the mRNA. Its function is antagonized by small RNA(s).</text>
</comment>
<comment type="subunit">
    <text evidence="1">Homodimer; the beta-strands of each monomer intercalate to form a hydrophobic core, while the alpha-helices form wings that extend away from the core.</text>
</comment>
<comment type="subcellular location">
    <subcellularLocation>
        <location evidence="1">Cytoplasm</location>
    </subcellularLocation>
</comment>
<comment type="similarity">
    <text evidence="1">Belongs to the CsrA/RsmA family.</text>
</comment>
<name>CSRA_XANC8</name>
<reference key="1">
    <citation type="journal article" date="2005" name="Genome Res.">
        <title>Comparative and functional genomic analyses of the pathogenicity of phytopathogen Xanthomonas campestris pv. campestris.</title>
        <authorList>
            <person name="Qian W."/>
            <person name="Jia Y."/>
            <person name="Ren S.-X."/>
            <person name="He Y.-Q."/>
            <person name="Feng J.-X."/>
            <person name="Lu L.-F."/>
            <person name="Sun Q."/>
            <person name="Ying G."/>
            <person name="Tang D.-J."/>
            <person name="Tang H."/>
            <person name="Wu W."/>
            <person name="Hao P."/>
            <person name="Wang L."/>
            <person name="Jiang B.-L."/>
            <person name="Zeng S."/>
            <person name="Gu W.-Y."/>
            <person name="Lu G."/>
            <person name="Rong L."/>
            <person name="Tian Y."/>
            <person name="Yao Z."/>
            <person name="Fu G."/>
            <person name="Chen B."/>
            <person name="Fang R."/>
            <person name="Qiang B."/>
            <person name="Chen Z."/>
            <person name="Zhao G.-P."/>
            <person name="Tang J.-L."/>
            <person name="He C."/>
        </authorList>
    </citation>
    <scope>NUCLEOTIDE SEQUENCE [LARGE SCALE GENOMIC DNA]</scope>
    <source>
        <strain>8004</strain>
    </source>
</reference>
<dbReference type="EMBL" id="CP000050">
    <property type="protein sequence ID" value="AAY49556.1"/>
    <property type="molecule type" value="Genomic_DNA"/>
</dbReference>
<dbReference type="RefSeq" id="WP_011036902.1">
    <property type="nucleotide sequence ID" value="NZ_CP155948.1"/>
</dbReference>
<dbReference type="SMR" id="Q4UTR7"/>
<dbReference type="KEGG" id="xcb:XC_2506"/>
<dbReference type="HOGENOM" id="CLU_164837_2_1_6"/>
<dbReference type="Proteomes" id="UP000000420">
    <property type="component" value="Chromosome"/>
</dbReference>
<dbReference type="GO" id="GO:0005829">
    <property type="term" value="C:cytosol"/>
    <property type="evidence" value="ECO:0007669"/>
    <property type="project" value="TreeGrafter"/>
</dbReference>
<dbReference type="GO" id="GO:0048027">
    <property type="term" value="F:mRNA 5'-UTR binding"/>
    <property type="evidence" value="ECO:0007669"/>
    <property type="project" value="UniProtKB-UniRule"/>
</dbReference>
<dbReference type="GO" id="GO:0006402">
    <property type="term" value="P:mRNA catabolic process"/>
    <property type="evidence" value="ECO:0007669"/>
    <property type="project" value="InterPro"/>
</dbReference>
<dbReference type="GO" id="GO:0045947">
    <property type="term" value="P:negative regulation of translational initiation"/>
    <property type="evidence" value="ECO:0007669"/>
    <property type="project" value="UniProtKB-UniRule"/>
</dbReference>
<dbReference type="GO" id="GO:0045948">
    <property type="term" value="P:positive regulation of translational initiation"/>
    <property type="evidence" value="ECO:0007669"/>
    <property type="project" value="UniProtKB-UniRule"/>
</dbReference>
<dbReference type="GO" id="GO:0006109">
    <property type="term" value="P:regulation of carbohydrate metabolic process"/>
    <property type="evidence" value="ECO:0007669"/>
    <property type="project" value="UniProtKB-UniRule"/>
</dbReference>
<dbReference type="FunFam" id="2.60.40.4380:FF:000001">
    <property type="entry name" value="Translational regulator CsrA"/>
    <property type="match status" value="1"/>
</dbReference>
<dbReference type="Gene3D" id="2.60.40.4380">
    <property type="entry name" value="Translational regulator CsrA"/>
    <property type="match status" value="1"/>
</dbReference>
<dbReference type="HAMAP" id="MF_00167">
    <property type="entry name" value="CsrA"/>
    <property type="match status" value="1"/>
</dbReference>
<dbReference type="InterPro" id="IPR003751">
    <property type="entry name" value="CsrA"/>
</dbReference>
<dbReference type="InterPro" id="IPR036107">
    <property type="entry name" value="CsrA_sf"/>
</dbReference>
<dbReference type="NCBIfam" id="TIGR00202">
    <property type="entry name" value="csrA"/>
    <property type="match status" value="1"/>
</dbReference>
<dbReference type="NCBIfam" id="NF002469">
    <property type="entry name" value="PRK01712.1"/>
    <property type="match status" value="1"/>
</dbReference>
<dbReference type="PANTHER" id="PTHR34984">
    <property type="entry name" value="CARBON STORAGE REGULATOR"/>
    <property type="match status" value="1"/>
</dbReference>
<dbReference type="PANTHER" id="PTHR34984:SF1">
    <property type="entry name" value="CARBON STORAGE REGULATOR"/>
    <property type="match status" value="1"/>
</dbReference>
<dbReference type="Pfam" id="PF02599">
    <property type="entry name" value="CsrA"/>
    <property type="match status" value="1"/>
</dbReference>
<dbReference type="SUPFAM" id="SSF117130">
    <property type="entry name" value="CsrA-like"/>
    <property type="match status" value="1"/>
</dbReference>
<proteinExistence type="inferred from homology"/>
<organism>
    <name type="scientific">Xanthomonas campestris pv. campestris (strain 8004)</name>
    <dbReference type="NCBI Taxonomy" id="314565"/>
    <lineage>
        <taxon>Bacteria</taxon>
        <taxon>Pseudomonadati</taxon>
        <taxon>Pseudomonadota</taxon>
        <taxon>Gammaproteobacteria</taxon>
        <taxon>Lysobacterales</taxon>
        <taxon>Lysobacteraceae</taxon>
        <taxon>Xanthomonas</taxon>
    </lineage>
</organism>
<protein>
    <recommendedName>
        <fullName evidence="1">Translational regulator CsrA</fullName>
    </recommendedName>
    <alternativeName>
        <fullName evidence="1">Carbon storage regulator</fullName>
    </alternativeName>
</protein>
<accession>Q4UTR7</accession>